<sequence>MSDFQREQRKNEHVEIAMAQSDAPQSDFDRVRFVHHSIPSINVDEVDLTSRTTDFDMTYPIYINAMTGGSEWTKQINEKLAVVARETGLAMAVGSTHAALRNPKMAESFSIARQTNPEGIIFSNVGADVPVDKAVEAVSLLDAQALQIHVNAPQELVMPEGNREFSTWLDNVAAIVQRVDVPVIIKEVGFGMSKELYKDLIDVGVTYVDVSGKGGTNFVTIENERRSNKDMDYLANWGQSTVESLLESSAYQDSLNVFASGGVRTPLDVVKSLALGAKAVGMSRPFLNQVENGGITTTIEYVESFIEHTKSIMTMLNARDISELKQSKFVFDHKLMSWIEQRGLDIHRG</sequence>
<keyword id="KW-0963">Cytoplasm</keyword>
<keyword id="KW-0285">Flavoprotein</keyword>
<keyword id="KW-0288">FMN</keyword>
<keyword id="KW-0413">Isomerase</keyword>
<keyword id="KW-0414">Isoprene biosynthesis</keyword>
<keyword id="KW-0460">Magnesium</keyword>
<keyword id="KW-0479">Metal-binding</keyword>
<keyword id="KW-0521">NADP</keyword>
<gene>
    <name evidence="1" type="primary">fni</name>
    <name type="ordered locus">SH0712</name>
</gene>
<proteinExistence type="inferred from homology"/>
<name>IDI2_STAHJ</name>
<protein>
    <recommendedName>
        <fullName evidence="1">Isopentenyl-diphosphate delta-isomerase</fullName>
        <shortName evidence="1">IPP isomerase</shortName>
        <ecNumber evidence="1">5.3.3.2</ecNumber>
    </recommendedName>
    <alternativeName>
        <fullName evidence="1">Isopentenyl diphosphate:dimethylallyl diphosphate isomerase</fullName>
    </alternativeName>
    <alternativeName>
        <fullName evidence="1">Isopentenyl pyrophosphate isomerase</fullName>
    </alternativeName>
    <alternativeName>
        <fullName evidence="1">Type 2 isopentenyl diphosphate isomerase</fullName>
        <shortName evidence="1">IDI-2</shortName>
    </alternativeName>
</protein>
<comment type="function">
    <text evidence="1">Involved in the biosynthesis of isoprenoids. Catalyzes the 1,3-allylic rearrangement of the homoallylic substrate isopentenyl (IPP) to its allylic isomer, dimethylallyl diphosphate (DMAPP).</text>
</comment>
<comment type="catalytic activity">
    <reaction evidence="1">
        <text>isopentenyl diphosphate = dimethylallyl diphosphate</text>
        <dbReference type="Rhea" id="RHEA:23284"/>
        <dbReference type="ChEBI" id="CHEBI:57623"/>
        <dbReference type="ChEBI" id="CHEBI:128769"/>
        <dbReference type="EC" id="5.3.3.2"/>
    </reaction>
</comment>
<comment type="cofactor">
    <cofactor evidence="1">
        <name>FMN</name>
        <dbReference type="ChEBI" id="CHEBI:58210"/>
    </cofactor>
</comment>
<comment type="cofactor">
    <cofactor evidence="1">
        <name>NADPH</name>
        <dbReference type="ChEBI" id="CHEBI:57783"/>
    </cofactor>
</comment>
<comment type="cofactor">
    <cofactor evidence="1">
        <name>Mg(2+)</name>
        <dbReference type="ChEBI" id="CHEBI:18420"/>
    </cofactor>
</comment>
<comment type="subunit">
    <text evidence="1">Homooctamer. Dimer of tetramers.</text>
</comment>
<comment type="subcellular location">
    <subcellularLocation>
        <location evidence="1">Cytoplasm</location>
    </subcellularLocation>
</comment>
<comment type="similarity">
    <text evidence="1">Belongs to the IPP isomerase type 2 family.</text>
</comment>
<evidence type="ECO:0000255" key="1">
    <source>
        <dbReference type="HAMAP-Rule" id="MF_00354"/>
    </source>
</evidence>
<dbReference type="EC" id="5.3.3.2" evidence="1"/>
<dbReference type="EMBL" id="AP006716">
    <property type="protein sequence ID" value="BAE04021.1"/>
    <property type="molecule type" value="Genomic_DNA"/>
</dbReference>
<dbReference type="RefSeq" id="WP_011275037.1">
    <property type="nucleotide sequence ID" value="NC_007168.1"/>
</dbReference>
<dbReference type="SMR" id="Q4L8K4"/>
<dbReference type="KEGG" id="sha:SH0712"/>
<dbReference type="eggNOG" id="COG1304">
    <property type="taxonomic scope" value="Bacteria"/>
</dbReference>
<dbReference type="HOGENOM" id="CLU_065515_0_0_9"/>
<dbReference type="OrthoDB" id="9795032at2"/>
<dbReference type="Proteomes" id="UP000000543">
    <property type="component" value="Chromosome"/>
</dbReference>
<dbReference type="GO" id="GO:0005737">
    <property type="term" value="C:cytoplasm"/>
    <property type="evidence" value="ECO:0007669"/>
    <property type="project" value="UniProtKB-SubCell"/>
</dbReference>
<dbReference type="GO" id="GO:0010181">
    <property type="term" value="F:FMN binding"/>
    <property type="evidence" value="ECO:0007669"/>
    <property type="project" value="UniProtKB-UniRule"/>
</dbReference>
<dbReference type="GO" id="GO:0004452">
    <property type="term" value="F:isopentenyl-diphosphate delta-isomerase activity"/>
    <property type="evidence" value="ECO:0007669"/>
    <property type="project" value="UniProtKB-UniRule"/>
</dbReference>
<dbReference type="GO" id="GO:0000287">
    <property type="term" value="F:magnesium ion binding"/>
    <property type="evidence" value="ECO:0007669"/>
    <property type="project" value="UniProtKB-UniRule"/>
</dbReference>
<dbReference type="GO" id="GO:0070402">
    <property type="term" value="F:NADPH binding"/>
    <property type="evidence" value="ECO:0007669"/>
    <property type="project" value="UniProtKB-UniRule"/>
</dbReference>
<dbReference type="GO" id="GO:0016491">
    <property type="term" value="F:oxidoreductase activity"/>
    <property type="evidence" value="ECO:0007669"/>
    <property type="project" value="InterPro"/>
</dbReference>
<dbReference type="GO" id="GO:0008299">
    <property type="term" value="P:isoprenoid biosynthetic process"/>
    <property type="evidence" value="ECO:0007669"/>
    <property type="project" value="UniProtKB-UniRule"/>
</dbReference>
<dbReference type="CDD" id="cd02811">
    <property type="entry name" value="IDI-2_FMN"/>
    <property type="match status" value="1"/>
</dbReference>
<dbReference type="Gene3D" id="3.20.20.70">
    <property type="entry name" value="Aldolase class I"/>
    <property type="match status" value="1"/>
</dbReference>
<dbReference type="HAMAP" id="MF_00354">
    <property type="entry name" value="Idi_2"/>
    <property type="match status" value="1"/>
</dbReference>
<dbReference type="InterPro" id="IPR013785">
    <property type="entry name" value="Aldolase_TIM"/>
</dbReference>
<dbReference type="InterPro" id="IPR000262">
    <property type="entry name" value="FMN-dep_DH"/>
</dbReference>
<dbReference type="InterPro" id="IPR011179">
    <property type="entry name" value="IPdP_isomerase"/>
</dbReference>
<dbReference type="NCBIfam" id="TIGR02151">
    <property type="entry name" value="IPP_isom_2"/>
    <property type="match status" value="1"/>
</dbReference>
<dbReference type="PANTHER" id="PTHR43665">
    <property type="entry name" value="ISOPENTENYL-DIPHOSPHATE DELTA-ISOMERASE"/>
    <property type="match status" value="1"/>
</dbReference>
<dbReference type="PANTHER" id="PTHR43665:SF1">
    <property type="entry name" value="ISOPENTENYL-DIPHOSPHATE DELTA-ISOMERASE"/>
    <property type="match status" value="1"/>
</dbReference>
<dbReference type="Pfam" id="PF01070">
    <property type="entry name" value="FMN_dh"/>
    <property type="match status" value="1"/>
</dbReference>
<dbReference type="PIRSF" id="PIRSF003314">
    <property type="entry name" value="IPP_isomerase"/>
    <property type="match status" value="1"/>
</dbReference>
<dbReference type="SUPFAM" id="SSF51395">
    <property type="entry name" value="FMN-linked oxidoreductases"/>
    <property type="match status" value="1"/>
</dbReference>
<accession>Q4L8K4</accession>
<feature type="chain" id="PRO_0000229511" description="Isopentenyl-diphosphate delta-isomerase">
    <location>
        <begin position="1"/>
        <end position="349"/>
    </location>
</feature>
<feature type="binding site" evidence="1">
    <location>
        <begin position="9"/>
        <end position="10"/>
    </location>
    <ligand>
        <name>substrate</name>
    </ligand>
</feature>
<feature type="binding site" evidence="1">
    <location>
        <begin position="65"/>
        <end position="67"/>
    </location>
    <ligand>
        <name>FMN</name>
        <dbReference type="ChEBI" id="CHEBI:58210"/>
    </ligand>
</feature>
<feature type="binding site" evidence="1">
    <location>
        <begin position="95"/>
        <end position="97"/>
    </location>
    <ligand>
        <name>substrate</name>
    </ligand>
</feature>
<feature type="binding site" evidence="1">
    <location>
        <position position="95"/>
    </location>
    <ligand>
        <name>FMN</name>
        <dbReference type="ChEBI" id="CHEBI:58210"/>
    </ligand>
</feature>
<feature type="binding site" evidence="1">
    <location>
        <position position="124"/>
    </location>
    <ligand>
        <name>FMN</name>
        <dbReference type="ChEBI" id="CHEBI:58210"/>
    </ligand>
</feature>
<feature type="binding site" evidence="1">
    <location>
        <position position="154"/>
    </location>
    <ligand>
        <name>substrate</name>
    </ligand>
</feature>
<feature type="binding site" evidence="1">
    <location>
        <position position="155"/>
    </location>
    <ligand>
        <name>Mg(2+)</name>
        <dbReference type="ChEBI" id="CHEBI:18420"/>
    </ligand>
</feature>
<feature type="binding site" evidence="1">
    <location>
        <position position="186"/>
    </location>
    <ligand>
        <name>FMN</name>
        <dbReference type="ChEBI" id="CHEBI:58210"/>
    </ligand>
</feature>
<feature type="binding site" evidence="1">
    <location>
        <position position="211"/>
    </location>
    <ligand>
        <name>FMN</name>
        <dbReference type="ChEBI" id="CHEBI:58210"/>
    </ligand>
</feature>
<feature type="binding site" evidence="1">
    <location>
        <position position="216"/>
    </location>
    <ligand>
        <name>FMN</name>
        <dbReference type="ChEBI" id="CHEBI:58210"/>
    </ligand>
</feature>
<feature type="binding site" evidence="1">
    <location>
        <begin position="262"/>
        <end position="264"/>
    </location>
    <ligand>
        <name>FMN</name>
        <dbReference type="ChEBI" id="CHEBI:58210"/>
    </ligand>
</feature>
<feature type="binding site" evidence="1">
    <location>
        <begin position="283"/>
        <end position="284"/>
    </location>
    <ligand>
        <name>FMN</name>
        <dbReference type="ChEBI" id="CHEBI:58210"/>
    </ligand>
</feature>
<reference key="1">
    <citation type="journal article" date="2005" name="J. Bacteriol.">
        <title>Whole-genome sequencing of Staphylococcus haemolyticus uncovers the extreme plasticity of its genome and the evolution of human-colonizing staphylococcal species.</title>
        <authorList>
            <person name="Takeuchi F."/>
            <person name="Watanabe S."/>
            <person name="Baba T."/>
            <person name="Yuzawa H."/>
            <person name="Ito T."/>
            <person name="Morimoto Y."/>
            <person name="Kuroda M."/>
            <person name="Cui L."/>
            <person name="Takahashi M."/>
            <person name="Ankai A."/>
            <person name="Baba S."/>
            <person name="Fukui S."/>
            <person name="Lee J.C."/>
            <person name="Hiramatsu K."/>
        </authorList>
    </citation>
    <scope>NUCLEOTIDE SEQUENCE [LARGE SCALE GENOMIC DNA]</scope>
    <source>
        <strain>JCSC1435</strain>
    </source>
</reference>
<organism>
    <name type="scientific">Staphylococcus haemolyticus (strain JCSC1435)</name>
    <dbReference type="NCBI Taxonomy" id="279808"/>
    <lineage>
        <taxon>Bacteria</taxon>
        <taxon>Bacillati</taxon>
        <taxon>Bacillota</taxon>
        <taxon>Bacilli</taxon>
        <taxon>Bacillales</taxon>
        <taxon>Staphylococcaceae</taxon>
        <taxon>Staphylococcus</taxon>
    </lineage>
</organism>